<protein>
    <recommendedName>
        <fullName evidence="1">ATP synthase subunit c, chloroplastic</fullName>
    </recommendedName>
    <alternativeName>
        <fullName evidence="1">ATP synthase F(0) sector subunit c</fullName>
    </alternativeName>
    <alternativeName>
        <fullName evidence="1">ATPase subunit III</fullName>
    </alternativeName>
    <alternativeName>
        <fullName evidence="1">F-type ATPase subunit c</fullName>
        <shortName evidence="1">F-ATPase subunit c</shortName>
    </alternativeName>
    <alternativeName>
        <fullName evidence="1">Lipid-binding protein</fullName>
    </alternativeName>
</protein>
<proteinExistence type="inferred from homology"/>
<keyword id="KW-0066">ATP synthesis</keyword>
<keyword id="KW-0138">CF(0)</keyword>
<keyword id="KW-0150">Chloroplast</keyword>
<keyword id="KW-0375">Hydrogen ion transport</keyword>
<keyword id="KW-0406">Ion transport</keyword>
<keyword id="KW-0446">Lipid-binding</keyword>
<keyword id="KW-0472">Membrane</keyword>
<keyword id="KW-0934">Plastid</keyword>
<keyword id="KW-0793">Thylakoid</keyword>
<keyword id="KW-0812">Transmembrane</keyword>
<keyword id="KW-1133">Transmembrane helix</keyword>
<keyword id="KW-0813">Transport</keyword>
<feature type="chain" id="PRO_0000112190" description="ATP synthase subunit c, chloroplastic">
    <location>
        <begin position="1"/>
        <end position="81"/>
    </location>
</feature>
<feature type="transmembrane region" description="Helical" evidence="1">
    <location>
        <begin position="3"/>
        <end position="23"/>
    </location>
</feature>
<feature type="transmembrane region" description="Helical" evidence="1">
    <location>
        <begin position="57"/>
        <end position="77"/>
    </location>
</feature>
<feature type="site" description="Reversibly protonated during proton transport" evidence="1">
    <location>
        <position position="61"/>
    </location>
</feature>
<sequence length="81" mass="7990">MNPIISAASVIAAGLAVGLASIGPGVGQGTAAGQAVEGIARQPEAEGKIRGTLLLSLAFMEALTIYGLVVALALLFANPFV</sequence>
<geneLocation type="chloroplast"/>
<gene>
    <name evidence="1" type="primary">atpH</name>
</gene>
<evidence type="ECO:0000255" key="1">
    <source>
        <dbReference type="HAMAP-Rule" id="MF_01396"/>
    </source>
</evidence>
<name>ATPH_LOTJA</name>
<dbReference type="EMBL" id="AP002983">
    <property type="protein sequence ID" value="BAB33199.1"/>
    <property type="molecule type" value="Genomic_DNA"/>
</dbReference>
<dbReference type="RefSeq" id="NP_084801.1">
    <property type="nucleotide sequence ID" value="NC_002694.1"/>
</dbReference>
<dbReference type="SMR" id="P69194"/>
<dbReference type="GeneID" id="802832"/>
<dbReference type="OMA" id="QPELMNE"/>
<dbReference type="GO" id="GO:0009535">
    <property type="term" value="C:chloroplast thylakoid membrane"/>
    <property type="evidence" value="ECO:0007669"/>
    <property type="project" value="UniProtKB-SubCell"/>
</dbReference>
<dbReference type="GO" id="GO:0045259">
    <property type="term" value="C:proton-transporting ATP synthase complex"/>
    <property type="evidence" value="ECO:0007669"/>
    <property type="project" value="UniProtKB-KW"/>
</dbReference>
<dbReference type="GO" id="GO:0033177">
    <property type="term" value="C:proton-transporting two-sector ATPase complex, proton-transporting domain"/>
    <property type="evidence" value="ECO:0007669"/>
    <property type="project" value="InterPro"/>
</dbReference>
<dbReference type="GO" id="GO:0008289">
    <property type="term" value="F:lipid binding"/>
    <property type="evidence" value="ECO:0007669"/>
    <property type="project" value="UniProtKB-KW"/>
</dbReference>
<dbReference type="GO" id="GO:0046933">
    <property type="term" value="F:proton-transporting ATP synthase activity, rotational mechanism"/>
    <property type="evidence" value="ECO:0007669"/>
    <property type="project" value="UniProtKB-UniRule"/>
</dbReference>
<dbReference type="CDD" id="cd18183">
    <property type="entry name" value="ATP-synt_Fo_c_ATPH"/>
    <property type="match status" value="1"/>
</dbReference>
<dbReference type="FunFam" id="1.20.20.10:FF:000001">
    <property type="entry name" value="ATP synthase subunit c, chloroplastic"/>
    <property type="match status" value="1"/>
</dbReference>
<dbReference type="Gene3D" id="1.20.20.10">
    <property type="entry name" value="F1F0 ATP synthase subunit C"/>
    <property type="match status" value="1"/>
</dbReference>
<dbReference type="HAMAP" id="MF_01396">
    <property type="entry name" value="ATP_synth_c_bact"/>
    <property type="match status" value="1"/>
</dbReference>
<dbReference type="InterPro" id="IPR005953">
    <property type="entry name" value="ATP_synth_csu_bac/chlpt"/>
</dbReference>
<dbReference type="InterPro" id="IPR000454">
    <property type="entry name" value="ATP_synth_F0_csu"/>
</dbReference>
<dbReference type="InterPro" id="IPR020537">
    <property type="entry name" value="ATP_synth_F0_csu_DDCD_BS"/>
</dbReference>
<dbReference type="InterPro" id="IPR038662">
    <property type="entry name" value="ATP_synth_F0_csu_sf"/>
</dbReference>
<dbReference type="InterPro" id="IPR002379">
    <property type="entry name" value="ATPase_proteolipid_c-like_dom"/>
</dbReference>
<dbReference type="InterPro" id="IPR035921">
    <property type="entry name" value="F/V-ATP_Csub_sf"/>
</dbReference>
<dbReference type="NCBIfam" id="TIGR01260">
    <property type="entry name" value="ATP_synt_c"/>
    <property type="match status" value="1"/>
</dbReference>
<dbReference type="NCBIfam" id="NF005608">
    <property type="entry name" value="PRK07354.1"/>
    <property type="match status" value="1"/>
</dbReference>
<dbReference type="PANTHER" id="PTHR10031">
    <property type="entry name" value="ATP SYNTHASE LIPID-BINDING PROTEIN, MITOCHONDRIAL"/>
    <property type="match status" value="1"/>
</dbReference>
<dbReference type="PANTHER" id="PTHR10031:SF0">
    <property type="entry name" value="ATPASE PROTEIN 9"/>
    <property type="match status" value="1"/>
</dbReference>
<dbReference type="Pfam" id="PF00137">
    <property type="entry name" value="ATP-synt_C"/>
    <property type="match status" value="1"/>
</dbReference>
<dbReference type="PRINTS" id="PR00124">
    <property type="entry name" value="ATPASEC"/>
</dbReference>
<dbReference type="SUPFAM" id="SSF81333">
    <property type="entry name" value="F1F0 ATP synthase subunit C"/>
    <property type="match status" value="1"/>
</dbReference>
<dbReference type="PROSITE" id="PS00605">
    <property type="entry name" value="ATPASE_C"/>
    <property type="match status" value="1"/>
</dbReference>
<comment type="function">
    <text evidence="1">F(1)F(0) ATP synthase produces ATP from ADP in the presence of a proton or sodium gradient. F-type ATPases consist of two structural domains, F(1) containing the extramembraneous catalytic core and F(0) containing the membrane proton channel, linked together by a central stalk and a peripheral stalk. During catalysis, ATP synthesis in the catalytic domain of F(1) is coupled via a rotary mechanism of the central stalk subunits to proton translocation.</text>
</comment>
<comment type="function">
    <text evidence="1">Key component of the F(0) channel; it plays a direct role in translocation across the membrane. A homomeric c-ring of between 10-14 subunits forms the central stalk rotor element with the F(1) delta and epsilon subunits.</text>
</comment>
<comment type="subunit">
    <text evidence="1">F-type ATPases have 2 components, F(1) - the catalytic core - and F(0) - the membrane proton channel. F(1) has five subunits: alpha(3), beta(3), gamma(1), delta(1), epsilon(1). F(0) has four main subunits: a(1), b(1), b'(1) and c(10-14). The alpha and beta chains form an alternating ring which encloses part of the gamma chain. F(1) is attached to F(0) by a central stalk formed by the gamma and epsilon chains, while a peripheral stalk is formed by the delta, b and b' chains.</text>
</comment>
<comment type="subcellular location">
    <subcellularLocation>
        <location evidence="1">Plastid</location>
        <location evidence="1">Chloroplast thylakoid membrane</location>
        <topology evidence="1">Multi-pass membrane protein</topology>
    </subcellularLocation>
</comment>
<comment type="miscellaneous">
    <text>In plastids the F-type ATPase is also known as CF(1)CF(0).</text>
</comment>
<comment type="similarity">
    <text evidence="1">Belongs to the ATPase C chain family.</text>
</comment>
<accession>P69194</accession>
<accession>P12231</accession>
<organism>
    <name type="scientific">Lotus japonicus</name>
    <name type="common">Lotus corniculatus var. japonicus</name>
    <dbReference type="NCBI Taxonomy" id="34305"/>
    <lineage>
        <taxon>Eukaryota</taxon>
        <taxon>Viridiplantae</taxon>
        <taxon>Streptophyta</taxon>
        <taxon>Embryophyta</taxon>
        <taxon>Tracheophyta</taxon>
        <taxon>Spermatophyta</taxon>
        <taxon>Magnoliopsida</taxon>
        <taxon>eudicotyledons</taxon>
        <taxon>Gunneridae</taxon>
        <taxon>Pentapetalae</taxon>
        <taxon>rosids</taxon>
        <taxon>fabids</taxon>
        <taxon>Fabales</taxon>
        <taxon>Fabaceae</taxon>
        <taxon>Papilionoideae</taxon>
        <taxon>50 kb inversion clade</taxon>
        <taxon>NPAAA clade</taxon>
        <taxon>Hologalegina</taxon>
        <taxon>robinioid clade</taxon>
        <taxon>Loteae</taxon>
        <taxon>Lotus</taxon>
    </lineage>
</organism>
<reference key="1">
    <citation type="journal article" date="2000" name="DNA Res.">
        <title>Complete structure of the chloroplast genome of a legume, Lotus japonicus.</title>
        <authorList>
            <person name="Kato T."/>
            <person name="Kaneko T."/>
            <person name="Sato S."/>
            <person name="Nakamura Y."/>
            <person name="Tabata S."/>
        </authorList>
    </citation>
    <scope>NUCLEOTIDE SEQUENCE [LARGE SCALE GENOMIC DNA]</scope>
    <source>
        <strain>cv. Miyakojima MG-20</strain>
    </source>
</reference>